<comment type="function">
    <text evidence="1">One of the primary rRNA binding proteins. Required for association of the 30S and 50S subunits to form the 70S ribosome, for tRNA binding and peptide bond formation. It has been suggested to have peptidyltransferase activity; this is somewhat controversial. Makes several contacts with the 16S rRNA in the 70S ribosome.</text>
</comment>
<comment type="subunit">
    <text evidence="1">Part of the 50S ribosomal subunit. Forms a bridge to the 30S subunit in the 70S ribosome.</text>
</comment>
<comment type="similarity">
    <text evidence="1">Belongs to the universal ribosomal protein uL2 family.</text>
</comment>
<reference key="1">
    <citation type="journal article" date="2011" name="MBio">
        <title>Novel metabolic attributes of the genus Cyanothece, comprising a group of unicellular nitrogen-fixing Cyanobacteria.</title>
        <authorList>
            <person name="Bandyopadhyay A."/>
            <person name="Elvitigala T."/>
            <person name="Welsh E."/>
            <person name="Stockel J."/>
            <person name="Liberton M."/>
            <person name="Min H."/>
            <person name="Sherman L.A."/>
            <person name="Pakrasi H.B."/>
        </authorList>
    </citation>
    <scope>NUCLEOTIDE SEQUENCE [LARGE SCALE GENOMIC DNA]</scope>
    <source>
        <strain>PCC 7425 / ATCC 29141</strain>
    </source>
</reference>
<organism>
    <name type="scientific">Cyanothece sp. (strain PCC 7425 / ATCC 29141)</name>
    <dbReference type="NCBI Taxonomy" id="395961"/>
    <lineage>
        <taxon>Bacteria</taxon>
        <taxon>Bacillati</taxon>
        <taxon>Cyanobacteriota</taxon>
        <taxon>Cyanophyceae</taxon>
        <taxon>Gomontiellales</taxon>
        <taxon>Cyanothecaceae</taxon>
        <taxon>Cyanothece</taxon>
    </lineage>
</organism>
<gene>
    <name evidence="1" type="primary">rplB</name>
    <name evidence="1" type="synonym">rpl2</name>
    <name type="ordered locus">Cyan7425_1295</name>
</gene>
<name>RL2_CYAP4</name>
<dbReference type="EMBL" id="CP001344">
    <property type="protein sequence ID" value="ACL43672.1"/>
    <property type="molecule type" value="Genomic_DNA"/>
</dbReference>
<dbReference type="SMR" id="B8HMQ7"/>
<dbReference type="STRING" id="395961.Cyan7425_1295"/>
<dbReference type="KEGG" id="cyn:Cyan7425_1295"/>
<dbReference type="eggNOG" id="COG0090">
    <property type="taxonomic scope" value="Bacteria"/>
</dbReference>
<dbReference type="HOGENOM" id="CLU_036235_2_1_3"/>
<dbReference type="OrthoDB" id="9778722at2"/>
<dbReference type="GO" id="GO:0015934">
    <property type="term" value="C:large ribosomal subunit"/>
    <property type="evidence" value="ECO:0007669"/>
    <property type="project" value="InterPro"/>
</dbReference>
<dbReference type="GO" id="GO:0019843">
    <property type="term" value="F:rRNA binding"/>
    <property type="evidence" value="ECO:0007669"/>
    <property type="project" value="UniProtKB-UniRule"/>
</dbReference>
<dbReference type="GO" id="GO:0003735">
    <property type="term" value="F:structural constituent of ribosome"/>
    <property type="evidence" value="ECO:0007669"/>
    <property type="project" value="InterPro"/>
</dbReference>
<dbReference type="GO" id="GO:0016740">
    <property type="term" value="F:transferase activity"/>
    <property type="evidence" value="ECO:0007669"/>
    <property type="project" value="InterPro"/>
</dbReference>
<dbReference type="GO" id="GO:0006412">
    <property type="term" value="P:translation"/>
    <property type="evidence" value="ECO:0007669"/>
    <property type="project" value="UniProtKB-UniRule"/>
</dbReference>
<dbReference type="FunFam" id="2.30.30.30:FF:000001">
    <property type="entry name" value="50S ribosomal protein L2"/>
    <property type="match status" value="1"/>
</dbReference>
<dbReference type="FunFam" id="2.40.50.140:FF:000003">
    <property type="entry name" value="50S ribosomal protein L2"/>
    <property type="match status" value="1"/>
</dbReference>
<dbReference type="FunFam" id="4.10.950.10:FF:000001">
    <property type="entry name" value="50S ribosomal protein L2"/>
    <property type="match status" value="1"/>
</dbReference>
<dbReference type="Gene3D" id="2.30.30.30">
    <property type="match status" value="1"/>
</dbReference>
<dbReference type="Gene3D" id="2.40.50.140">
    <property type="entry name" value="Nucleic acid-binding proteins"/>
    <property type="match status" value="1"/>
</dbReference>
<dbReference type="Gene3D" id="4.10.950.10">
    <property type="entry name" value="Ribosomal protein L2, domain 3"/>
    <property type="match status" value="1"/>
</dbReference>
<dbReference type="HAMAP" id="MF_01320_B">
    <property type="entry name" value="Ribosomal_uL2_B"/>
    <property type="match status" value="1"/>
</dbReference>
<dbReference type="InterPro" id="IPR012340">
    <property type="entry name" value="NA-bd_OB-fold"/>
</dbReference>
<dbReference type="InterPro" id="IPR014722">
    <property type="entry name" value="Rib_uL2_dom2"/>
</dbReference>
<dbReference type="InterPro" id="IPR002171">
    <property type="entry name" value="Ribosomal_uL2"/>
</dbReference>
<dbReference type="InterPro" id="IPR005880">
    <property type="entry name" value="Ribosomal_uL2_bac/org-type"/>
</dbReference>
<dbReference type="InterPro" id="IPR022669">
    <property type="entry name" value="Ribosomal_uL2_C"/>
</dbReference>
<dbReference type="InterPro" id="IPR022671">
    <property type="entry name" value="Ribosomal_uL2_CS"/>
</dbReference>
<dbReference type="InterPro" id="IPR014726">
    <property type="entry name" value="Ribosomal_uL2_dom3"/>
</dbReference>
<dbReference type="InterPro" id="IPR022666">
    <property type="entry name" value="Ribosomal_uL2_RNA-bd_dom"/>
</dbReference>
<dbReference type="InterPro" id="IPR008991">
    <property type="entry name" value="Translation_prot_SH3-like_sf"/>
</dbReference>
<dbReference type="NCBIfam" id="TIGR01171">
    <property type="entry name" value="rplB_bact"/>
    <property type="match status" value="1"/>
</dbReference>
<dbReference type="PANTHER" id="PTHR13691:SF5">
    <property type="entry name" value="LARGE RIBOSOMAL SUBUNIT PROTEIN UL2M"/>
    <property type="match status" value="1"/>
</dbReference>
<dbReference type="PANTHER" id="PTHR13691">
    <property type="entry name" value="RIBOSOMAL PROTEIN L2"/>
    <property type="match status" value="1"/>
</dbReference>
<dbReference type="Pfam" id="PF00181">
    <property type="entry name" value="Ribosomal_L2"/>
    <property type="match status" value="1"/>
</dbReference>
<dbReference type="Pfam" id="PF03947">
    <property type="entry name" value="Ribosomal_L2_C"/>
    <property type="match status" value="1"/>
</dbReference>
<dbReference type="PIRSF" id="PIRSF002158">
    <property type="entry name" value="Ribosomal_L2"/>
    <property type="match status" value="1"/>
</dbReference>
<dbReference type="SMART" id="SM01383">
    <property type="entry name" value="Ribosomal_L2"/>
    <property type="match status" value="1"/>
</dbReference>
<dbReference type="SMART" id="SM01382">
    <property type="entry name" value="Ribosomal_L2_C"/>
    <property type="match status" value="1"/>
</dbReference>
<dbReference type="SUPFAM" id="SSF50249">
    <property type="entry name" value="Nucleic acid-binding proteins"/>
    <property type="match status" value="1"/>
</dbReference>
<dbReference type="SUPFAM" id="SSF50104">
    <property type="entry name" value="Translation proteins SH3-like domain"/>
    <property type="match status" value="1"/>
</dbReference>
<dbReference type="PROSITE" id="PS00467">
    <property type="entry name" value="RIBOSOMAL_L2"/>
    <property type="match status" value="1"/>
</dbReference>
<keyword id="KW-0687">Ribonucleoprotein</keyword>
<keyword id="KW-0689">Ribosomal protein</keyword>
<keyword id="KW-0694">RNA-binding</keyword>
<keyword id="KW-0699">rRNA-binding</keyword>
<protein>
    <recommendedName>
        <fullName evidence="1">Large ribosomal subunit protein uL2</fullName>
    </recommendedName>
    <alternativeName>
        <fullName evidence="3">50S ribosomal protein L2</fullName>
    </alternativeName>
</protein>
<sequence>MGIRNYRPYTPGTRQKSVSDFSEITHDQPEKSLTSFRHRAKGRNNRGVITSRRRGGGHKRLYREIDFRRNKLSVPGTVLTVEYDPNRNARISLVQYEDGEKRYILHPRNLAVGAVIAAGPDAAIEVGNALPLSKIPLGTGVHNVEITPGRGGQMVRAAGAMAQVVAKEGDMVTLKLPSGEVRLFRKECYATIGQIGNVDVNNISIGKAGRNRWKGRRPKVRGSVMNPVDHPHGGGEGRAPIGRSGPVTPWGKPTLGYKTRKKKKLSNALIVRRRRKSSKRGRGGRQS</sequence>
<evidence type="ECO:0000255" key="1">
    <source>
        <dbReference type="HAMAP-Rule" id="MF_01320"/>
    </source>
</evidence>
<evidence type="ECO:0000256" key="2">
    <source>
        <dbReference type="SAM" id="MobiDB-lite"/>
    </source>
</evidence>
<evidence type="ECO:0000305" key="3"/>
<proteinExistence type="inferred from homology"/>
<feature type="chain" id="PRO_1000165742" description="Large ribosomal subunit protein uL2">
    <location>
        <begin position="1"/>
        <end position="287"/>
    </location>
</feature>
<feature type="region of interest" description="Disordered" evidence="2">
    <location>
        <begin position="1"/>
        <end position="30"/>
    </location>
</feature>
<feature type="region of interest" description="Disordered" evidence="2">
    <location>
        <begin position="211"/>
        <end position="287"/>
    </location>
</feature>
<feature type="compositionally biased region" description="Polar residues" evidence="2">
    <location>
        <begin position="12"/>
        <end position="22"/>
    </location>
</feature>
<feature type="compositionally biased region" description="Basic residues" evidence="2">
    <location>
        <begin position="211"/>
        <end position="220"/>
    </location>
</feature>
<feature type="compositionally biased region" description="Basic residues" evidence="2">
    <location>
        <begin position="258"/>
        <end position="287"/>
    </location>
</feature>
<accession>B8HMQ7</accession>